<keyword id="KW-0133">Cell shape</keyword>
<keyword id="KW-0961">Cell wall biogenesis/degradation</keyword>
<keyword id="KW-0413">Isomerase</keyword>
<keyword id="KW-0573">Peptidoglycan synthesis</keyword>
<gene>
    <name evidence="1" type="primary">murI</name>
    <name type="ordered locus">SPA3969</name>
</gene>
<name>MURI_SALPA</name>
<protein>
    <recommendedName>
        <fullName evidence="1">Glutamate racemase</fullName>
        <ecNumber evidence="1">5.1.1.3</ecNumber>
    </recommendedName>
</protein>
<accession>Q5PK79</accession>
<reference key="1">
    <citation type="journal article" date="2004" name="Nat. Genet.">
        <title>Comparison of genome degradation in Paratyphi A and Typhi, human-restricted serovars of Salmonella enterica that cause typhoid.</title>
        <authorList>
            <person name="McClelland M."/>
            <person name="Sanderson K.E."/>
            <person name="Clifton S.W."/>
            <person name="Latreille P."/>
            <person name="Porwollik S."/>
            <person name="Sabo A."/>
            <person name="Meyer R."/>
            <person name="Bieri T."/>
            <person name="Ozersky P."/>
            <person name="McLellan M."/>
            <person name="Harkins C.R."/>
            <person name="Wang C."/>
            <person name="Nguyen C."/>
            <person name="Berghoff A."/>
            <person name="Elliott G."/>
            <person name="Kohlberg S."/>
            <person name="Strong C."/>
            <person name="Du F."/>
            <person name="Carter J."/>
            <person name="Kremizki C."/>
            <person name="Layman D."/>
            <person name="Leonard S."/>
            <person name="Sun H."/>
            <person name="Fulton L."/>
            <person name="Nash W."/>
            <person name="Miner T."/>
            <person name="Minx P."/>
            <person name="Delehaunty K."/>
            <person name="Fronick C."/>
            <person name="Magrini V."/>
            <person name="Nhan M."/>
            <person name="Warren W."/>
            <person name="Florea L."/>
            <person name="Spieth J."/>
            <person name="Wilson R.K."/>
        </authorList>
    </citation>
    <scope>NUCLEOTIDE SEQUENCE [LARGE SCALE GENOMIC DNA]</scope>
    <source>
        <strain>ATCC 9150 / SARB42</strain>
    </source>
</reference>
<comment type="function">
    <text evidence="1">Provides the (R)-glutamate required for cell wall biosynthesis.</text>
</comment>
<comment type="catalytic activity">
    <reaction evidence="1">
        <text>L-glutamate = D-glutamate</text>
        <dbReference type="Rhea" id="RHEA:12813"/>
        <dbReference type="ChEBI" id="CHEBI:29985"/>
        <dbReference type="ChEBI" id="CHEBI:29986"/>
        <dbReference type="EC" id="5.1.1.3"/>
    </reaction>
</comment>
<comment type="pathway">
    <text evidence="1">Cell wall biogenesis; peptidoglycan biosynthesis.</text>
</comment>
<comment type="similarity">
    <text evidence="1">Belongs to the aspartate/glutamate racemases family.</text>
</comment>
<organism>
    <name type="scientific">Salmonella paratyphi A (strain ATCC 9150 / SARB42)</name>
    <dbReference type="NCBI Taxonomy" id="295319"/>
    <lineage>
        <taxon>Bacteria</taxon>
        <taxon>Pseudomonadati</taxon>
        <taxon>Pseudomonadota</taxon>
        <taxon>Gammaproteobacteria</taxon>
        <taxon>Enterobacterales</taxon>
        <taxon>Enterobacteriaceae</taxon>
        <taxon>Salmonella</taxon>
    </lineage>
</organism>
<feature type="chain" id="PRO_1000047602" description="Glutamate racemase">
    <location>
        <begin position="1"/>
        <end position="283"/>
    </location>
</feature>
<feature type="active site" description="Proton donor/acceptor" evidence="1">
    <location>
        <position position="92"/>
    </location>
</feature>
<feature type="active site" description="Proton donor/acceptor" evidence="1">
    <location>
        <position position="204"/>
    </location>
</feature>
<feature type="binding site" evidence="1">
    <location>
        <begin position="28"/>
        <end position="29"/>
    </location>
    <ligand>
        <name>substrate</name>
    </ligand>
</feature>
<feature type="binding site" evidence="1">
    <location>
        <begin position="60"/>
        <end position="61"/>
    </location>
    <ligand>
        <name>substrate</name>
    </ligand>
</feature>
<feature type="binding site" evidence="1">
    <location>
        <begin position="93"/>
        <end position="94"/>
    </location>
    <ligand>
        <name>substrate</name>
    </ligand>
</feature>
<feature type="binding site" evidence="1">
    <location>
        <begin position="205"/>
        <end position="206"/>
    </location>
    <ligand>
        <name>substrate</name>
    </ligand>
</feature>
<sequence length="283" mass="31017">MATKLQDENTPCLAATPSEPRPTVLVFDSGVGGLSVYDEIRRLLPDLHYIYAFDNVAFPYGEKSETFIVERVVEIVTAVQQRYPLSLAVIACNTASTVSLPALREKFAFPVVGVVPAIKPAARLTANGVVGLLATRATVKRPYTHELIARFANECQIAMLGSAELVELAEAKLHGDSVSLEELRRILRPWLRMPEPPDTVVLGCTHFPLLRDELLQVLPEGTRLVDSGAAIARRTAWLLEHEAPDAKSTDANIAYCMAMTPGAEQLLPVLQRYGFETLEKLAV</sequence>
<evidence type="ECO:0000255" key="1">
    <source>
        <dbReference type="HAMAP-Rule" id="MF_00258"/>
    </source>
</evidence>
<dbReference type="EC" id="5.1.1.3" evidence="1"/>
<dbReference type="EMBL" id="CP000026">
    <property type="protein sequence ID" value="AAV79731.1"/>
    <property type="molecule type" value="Genomic_DNA"/>
</dbReference>
<dbReference type="RefSeq" id="WP_000201804.1">
    <property type="nucleotide sequence ID" value="NC_006511.1"/>
</dbReference>
<dbReference type="SMR" id="Q5PK79"/>
<dbReference type="KEGG" id="spt:SPA3969"/>
<dbReference type="HOGENOM" id="CLU_052344_2_0_6"/>
<dbReference type="UniPathway" id="UPA00219"/>
<dbReference type="Proteomes" id="UP000008185">
    <property type="component" value="Chromosome"/>
</dbReference>
<dbReference type="GO" id="GO:0008881">
    <property type="term" value="F:glutamate racemase activity"/>
    <property type="evidence" value="ECO:0007669"/>
    <property type="project" value="UniProtKB-UniRule"/>
</dbReference>
<dbReference type="GO" id="GO:0071555">
    <property type="term" value="P:cell wall organization"/>
    <property type="evidence" value="ECO:0007669"/>
    <property type="project" value="UniProtKB-KW"/>
</dbReference>
<dbReference type="GO" id="GO:0009252">
    <property type="term" value="P:peptidoglycan biosynthetic process"/>
    <property type="evidence" value="ECO:0007669"/>
    <property type="project" value="UniProtKB-UniRule"/>
</dbReference>
<dbReference type="GO" id="GO:0008360">
    <property type="term" value="P:regulation of cell shape"/>
    <property type="evidence" value="ECO:0007669"/>
    <property type="project" value="UniProtKB-KW"/>
</dbReference>
<dbReference type="FunFam" id="3.40.50.1860:FF:000002">
    <property type="entry name" value="Glutamate racemase"/>
    <property type="match status" value="1"/>
</dbReference>
<dbReference type="Gene3D" id="3.40.50.1860">
    <property type="match status" value="2"/>
</dbReference>
<dbReference type="HAMAP" id="MF_00258">
    <property type="entry name" value="Glu_racemase"/>
    <property type="match status" value="1"/>
</dbReference>
<dbReference type="InterPro" id="IPR015942">
    <property type="entry name" value="Asp/Glu/hydantoin_racemase"/>
</dbReference>
<dbReference type="InterPro" id="IPR001920">
    <property type="entry name" value="Asp/Glu_race"/>
</dbReference>
<dbReference type="InterPro" id="IPR018187">
    <property type="entry name" value="Asp/Glu_racemase_AS_1"/>
</dbReference>
<dbReference type="InterPro" id="IPR033134">
    <property type="entry name" value="Asp/Glu_racemase_AS_2"/>
</dbReference>
<dbReference type="InterPro" id="IPR004391">
    <property type="entry name" value="Glu_race"/>
</dbReference>
<dbReference type="NCBIfam" id="TIGR00067">
    <property type="entry name" value="glut_race"/>
    <property type="match status" value="1"/>
</dbReference>
<dbReference type="NCBIfam" id="NF002034">
    <property type="entry name" value="PRK00865.1-1"/>
    <property type="match status" value="1"/>
</dbReference>
<dbReference type="PANTHER" id="PTHR21198">
    <property type="entry name" value="GLUTAMATE RACEMASE"/>
    <property type="match status" value="1"/>
</dbReference>
<dbReference type="PANTHER" id="PTHR21198:SF2">
    <property type="entry name" value="GLUTAMATE RACEMASE"/>
    <property type="match status" value="1"/>
</dbReference>
<dbReference type="Pfam" id="PF01177">
    <property type="entry name" value="Asp_Glu_race"/>
    <property type="match status" value="1"/>
</dbReference>
<dbReference type="SUPFAM" id="SSF53681">
    <property type="entry name" value="Aspartate/glutamate racemase"/>
    <property type="match status" value="2"/>
</dbReference>
<dbReference type="PROSITE" id="PS00923">
    <property type="entry name" value="ASP_GLU_RACEMASE_1"/>
    <property type="match status" value="1"/>
</dbReference>
<dbReference type="PROSITE" id="PS00924">
    <property type="entry name" value="ASP_GLU_RACEMASE_2"/>
    <property type="match status" value="1"/>
</dbReference>
<proteinExistence type="inferred from homology"/>